<organism>
    <name type="scientific">Acetobacter pasteurianus</name>
    <name type="common">Acetobacter turbidans</name>
    <dbReference type="NCBI Taxonomy" id="438"/>
    <lineage>
        <taxon>Bacteria</taxon>
        <taxon>Pseudomonadati</taxon>
        <taxon>Pseudomonadota</taxon>
        <taxon>Alphaproteobacteria</taxon>
        <taxon>Acetobacterales</taxon>
        <taxon>Acetobacteraceae</taxon>
        <taxon>Acetobacter</taxon>
    </lineage>
</organism>
<accession>P45358</accession>
<name>HIS8_ACEPA</name>
<reference key="1">
    <citation type="journal article" date="1993" name="J. Ferment. Bioeng.">
        <title>Suppression of an ethanol-sensitive mutation of Acetobacter pasteurianus by overexpression of the his1 gene encoding histidinol phosphate aminotransferase.</title>
        <authorList>
            <person name="Takemura H."/>
            <person name="Horinouchi S."/>
            <person name="Beppu T."/>
        </authorList>
    </citation>
    <scope>NUCLEOTIDE SEQUENCE [GENOMIC DNA]</scope>
    <source>
        <strain>NCI 1452</strain>
    </source>
</reference>
<gene>
    <name type="primary">hisC</name>
    <name type="synonym">his1</name>
</gene>
<proteinExistence type="inferred from homology"/>
<evidence type="ECO:0000250" key="1"/>
<evidence type="ECO:0000305" key="2"/>
<sequence length="356" mass="39136">MSRFWSPLVHKLTPYVPGEQPKMTDLIKLNTNESPYGPSPRALEAIRAADNDTLRLYPDPEALALRKALGARIGLGPEYVFVGNGSDEVLAHAFQAFFAHGEPLLFPDVTYSFYKVYCGLYSLPFRNVPLTDDMQVNVADYAGPCSGVVVANPNAPTGIALDLADVRKLLELQPNRVVLIDEAYVDFGAESAVSLIKEYPNLLVVQTFSKSRALAGLRVGFAFGQPELIEGLVRIKDSFNSYPLDRLAQVGATAAVEDEAWLATSVQKVMASRTVLTEGLQKLGFDVLPSKANFVYTRHPNRNAAELATQLRERAIIVRHLRGERTAAWLRITVGTDQQCETLLSALRDILCSNSL</sequence>
<protein>
    <recommendedName>
        <fullName>Histidinol-phosphate aminotransferase</fullName>
        <ecNumber>2.6.1.9</ecNumber>
    </recommendedName>
    <alternativeName>
        <fullName>Imidazole acetol-phosphate transaminase</fullName>
    </alternativeName>
</protein>
<comment type="catalytic activity">
    <reaction>
        <text>L-histidinol phosphate + 2-oxoglutarate = 3-(imidazol-4-yl)-2-oxopropyl phosphate + L-glutamate</text>
        <dbReference type="Rhea" id="RHEA:23744"/>
        <dbReference type="ChEBI" id="CHEBI:16810"/>
        <dbReference type="ChEBI" id="CHEBI:29985"/>
        <dbReference type="ChEBI" id="CHEBI:57766"/>
        <dbReference type="ChEBI" id="CHEBI:57980"/>
        <dbReference type="EC" id="2.6.1.9"/>
    </reaction>
</comment>
<comment type="cofactor">
    <cofactor evidence="1">
        <name>pyridoxal 5'-phosphate</name>
        <dbReference type="ChEBI" id="CHEBI:597326"/>
    </cofactor>
</comment>
<comment type="pathway">
    <text>Amino-acid biosynthesis; L-histidine biosynthesis; L-histidine from 5-phospho-alpha-D-ribose 1-diphosphate: step 7/9.</text>
</comment>
<comment type="subunit">
    <text evidence="1">Homodimer.</text>
</comment>
<comment type="similarity">
    <text evidence="2">Belongs to the class-II pyridoxal-phosphate-dependent aminotransferase family. Histidinol-phosphate aminotransferase subfamily.</text>
</comment>
<dbReference type="EC" id="2.6.1.9"/>
<dbReference type="EMBL" id="D14440">
    <property type="protein sequence ID" value="BAA03332.1"/>
    <property type="molecule type" value="Genomic_DNA"/>
</dbReference>
<dbReference type="PIR" id="I39488">
    <property type="entry name" value="I39488"/>
</dbReference>
<dbReference type="SMR" id="P45358"/>
<dbReference type="eggNOG" id="COG0079">
    <property type="taxonomic scope" value="Bacteria"/>
</dbReference>
<dbReference type="UniPathway" id="UPA00031">
    <property type="reaction ID" value="UER00012"/>
</dbReference>
<dbReference type="GO" id="GO:0004400">
    <property type="term" value="F:histidinol-phosphate transaminase activity"/>
    <property type="evidence" value="ECO:0007669"/>
    <property type="project" value="UniProtKB-UniRule"/>
</dbReference>
<dbReference type="GO" id="GO:0030170">
    <property type="term" value="F:pyridoxal phosphate binding"/>
    <property type="evidence" value="ECO:0007669"/>
    <property type="project" value="InterPro"/>
</dbReference>
<dbReference type="GO" id="GO:0000105">
    <property type="term" value="P:L-histidine biosynthetic process"/>
    <property type="evidence" value="ECO:0007669"/>
    <property type="project" value="UniProtKB-UniRule"/>
</dbReference>
<dbReference type="CDD" id="cd00609">
    <property type="entry name" value="AAT_like"/>
    <property type="match status" value="1"/>
</dbReference>
<dbReference type="Gene3D" id="3.90.1150.10">
    <property type="entry name" value="Aspartate Aminotransferase, domain 1"/>
    <property type="match status" value="1"/>
</dbReference>
<dbReference type="Gene3D" id="3.40.640.10">
    <property type="entry name" value="Type I PLP-dependent aspartate aminotransferase-like (Major domain)"/>
    <property type="match status" value="1"/>
</dbReference>
<dbReference type="HAMAP" id="MF_01023">
    <property type="entry name" value="HisC_aminotrans_2"/>
    <property type="match status" value="1"/>
</dbReference>
<dbReference type="InterPro" id="IPR001917">
    <property type="entry name" value="Aminotrans_II_pyridoxalP_BS"/>
</dbReference>
<dbReference type="InterPro" id="IPR004839">
    <property type="entry name" value="Aminotransferase_I/II_large"/>
</dbReference>
<dbReference type="InterPro" id="IPR005861">
    <property type="entry name" value="HisP_aminotrans"/>
</dbReference>
<dbReference type="InterPro" id="IPR050106">
    <property type="entry name" value="HistidinolP_aminotransfase"/>
</dbReference>
<dbReference type="InterPro" id="IPR015424">
    <property type="entry name" value="PyrdxlP-dep_Trfase"/>
</dbReference>
<dbReference type="InterPro" id="IPR015421">
    <property type="entry name" value="PyrdxlP-dep_Trfase_major"/>
</dbReference>
<dbReference type="InterPro" id="IPR015422">
    <property type="entry name" value="PyrdxlP-dep_Trfase_small"/>
</dbReference>
<dbReference type="NCBIfam" id="TIGR01141">
    <property type="entry name" value="hisC"/>
    <property type="match status" value="1"/>
</dbReference>
<dbReference type="PANTHER" id="PTHR43643:SF3">
    <property type="entry name" value="HISTIDINOL-PHOSPHATE AMINOTRANSFERASE"/>
    <property type="match status" value="1"/>
</dbReference>
<dbReference type="PANTHER" id="PTHR43643">
    <property type="entry name" value="HISTIDINOL-PHOSPHATE AMINOTRANSFERASE 2"/>
    <property type="match status" value="1"/>
</dbReference>
<dbReference type="Pfam" id="PF00155">
    <property type="entry name" value="Aminotran_1_2"/>
    <property type="match status" value="1"/>
</dbReference>
<dbReference type="SUPFAM" id="SSF53383">
    <property type="entry name" value="PLP-dependent transferases"/>
    <property type="match status" value="1"/>
</dbReference>
<dbReference type="PROSITE" id="PS00599">
    <property type="entry name" value="AA_TRANSFER_CLASS_2"/>
    <property type="match status" value="1"/>
</dbReference>
<feature type="chain" id="PRO_0000153290" description="Histidinol-phosphate aminotransferase">
    <location>
        <begin position="1"/>
        <end position="356"/>
    </location>
</feature>
<feature type="modified residue" description="N6-(pyridoxal phosphate)lysine" evidence="1">
    <location>
        <position position="210"/>
    </location>
</feature>
<keyword id="KW-0028">Amino-acid biosynthesis</keyword>
<keyword id="KW-0032">Aminotransferase</keyword>
<keyword id="KW-0368">Histidine biosynthesis</keyword>
<keyword id="KW-0663">Pyridoxal phosphate</keyword>
<keyword id="KW-0808">Transferase</keyword>